<keyword id="KW-0963">Cytoplasm</keyword>
<keyword id="KW-0350">Heme biosynthesis</keyword>
<keyword id="KW-0479">Metal-binding</keyword>
<keyword id="KW-0560">Oxidoreductase</keyword>
<keyword id="KW-0627">Porphyrin biosynthesis</keyword>
<accession>B7V0Q9</accession>
<name>HEM6_PSEA8</name>
<gene>
    <name evidence="1" type="primary">hemF</name>
    <name type="ordered locus">PLES_00231</name>
</gene>
<evidence type="ECO:0000255" key="1">
    <source>
        <dbReference type="HAMAP-Rule" id="MF_00333"/>
    </source>
</evidence>
<reference key="1">
    <citation type="journal article" date="2009" name="Genome Res.">
        <title>Newly introduced genomic prophage islands are critical determinants of in vivo competitiveness in the Liverpool epidemic strain of Pseudomonas aeruginosa.</title>
        <authorList>
            <person name="Winstanley C."/>
            <person name="Langille M.G.I."/>
            <person name="Fothergill J.L."/>
            <person name="Kukavica-Ibrulj I."/>
            <person name="Paradis-Bleau C."/>
            <person name="Sanschagrin F."/>
            <person name="Thomson N.R."/>
            <person name="Winsor G.L."/>
            <person name="Quail M.A."/>
            <person name="Lennard N."/>
            <person name="Bignell A."/>
            <person name="Clarke L."/>
            <person name="Seeger K."/>
            <person name="Saunders D."/>
            <person name="Harris D."/>
            <person name="Parkhill J."/>
            <person name="Hancock R.E.W."/>
            <person name="Brinkman F.S.L."/>
            <person name="Levesque R.C."/>
        </authorList>
    </citation>
    <scope>NUCLEOTIDE SEQUENCE [LARGE SCALE GENOMIC DNA]</scope>
    <source>
        <strain>LESB58</strain>
    </source>
</reference>
<sequence>MTDHIAAVKTYLLDLQDRICAALEAEDGKARFAEDAWERPAGGGGRTRVIGDGALIEKGGVNFSHVFGDSLPPSASAHRPELAGRGFQALGVSLVIHPENPHVPTSHANVRFFCAEKEGEEPVWWFGGGFDLTPYYAHEEDCVHWHRVARDACAPFGADVYPRYKEWCDRYFHLKHRNEPRGIGGLFFDDLNQWDFDTCFAFIRAIGDAYIDAYLPIVQRRKHTPFDERQREFQAYRRGRYVEFNLVFDRGTLFGLQSGGRTESILMSLPPQVRWGYDWKPEPGSEEARLTEYFLADRDWLAGQP</sequence>
<protein>
    <recommendedName>
        <fullName evidence="1">Oxygen-dependent coproporphyrinogen-III oxidase</fullName>
        <shortName evidence="1">CPO</shortName>
        <shortName evidence="1">Coprogen oxidase</shortName>
        <shortName evidence="1">Coproporphyrinogenase</shortName>
        <ecNumber evidence="1">1.3.3.3</ecNumber>
    </recommendedName>
</protein>
<organism>
    <name type="scientific">Pseudomonas aeruginosa (strain LESB58)</name>
    <dbReference type="NCBI Taxonomy" id="557722"/>
    <lineage>
        <taxon>Bacteria</taxon>
        <taxon>Pseudomonadati</taxon>
        <taxon>Pseudomonadota</taxon>
        <taxon>Gammaproteobacteria</taxon>
        <taxon>Pseudomonadales</taxon>
        <taxon>Pseudomonadaceae</taxon>
        <taxon>Pseudomonas</taxon>
    </lineage>
</organism>
<comment type="function">
    <text evidence="1">Involved in the heme biosynthesis. Catalyzes the aerobic oxidative decarboxylation of propionate groups of rings A and B of coproporphyrinogen-III to yield the vinyl groups in protoporphyrinogen-IX.</text>
</comment>
<comment type="catalytic activity">
    <reaction evidence="1">
        <text>coproporphyrinogen III + O2 + 2 H(+) = protoporphyrinogen IX + 2 CO2 + 2 H2O</text>
        <dbReference type="Rhea" id="RHEA:18257"/>
        <dbReference type="ChEBI" id="CHEBI:15377"/>
        <dbReference type="ChEBI" id="CHEBI:15378"/>
        <dbReference type="ChEBI" id="CHEBI:15379"/>
        <dbReference type="ChEBI" id="CHEBI:16526"/>
        <dbReference type="ChEBI" id="CHEBI:57307"/>
        <dbReference type="ChEBI" id="CHEBI:57309"/>
        <dbReference type="EC" id="1.3.3.3"/>
    </reaction>
</comment>
<comment type="cofactor">
    <cofactor evidence="1">
        <name>a divalent metal cation</name>
        <dbReference type="ChEBI" id="CHEBI:60240"/>
    </cofactor>
</comment>
<comment type="pathway">
    <text evidence="1">Porphyrin-containing compound metabolism; protoporphyrin-IX biosynthesis; protoporphyrinogen-IX from coproporphyrinogen-III (O2 route): step 1/1.</text>
</comment>
<comment type="subunit">
    <text evidence="1">Homodimer.</text>
</comment>
<comment type="subcellular location">
    <subcellularLocation>
        <location evidence="1">Cytoplasm</location>
    </subcellularLocation>
</comment>
<comment type="similarity">
    <text evidence="1">Belongs to the aerobic coproporphyrinogen-III oxidase family.</text>
</comment>
<proteinExistence type="inferred from homology"/>
<feature type="chain" id="PRO_1000119810" description="Oxygen-dependent coproporphyrinogen-III oxidase">
    <location>
        <begin position="1"/>
        <end position="305"/>
    </location>
</feature>
<feature type="region of interest" description="Important for dimerization" evidence="1">
    <location>
        <begin position="241"/>
        <end position="276"/>
    </location>
</feature>
<feature type="active site" description="Proton donor" evidence="1">
    <location>
        <position position="107"/>
    </location>
</feature>
<feature type="binding site" evidence="1">
    <location>
        <position position="93"/>
    </location>
    <ligand>
        <name>substrate</name>
    </ligand>
</feature>
<feature type="binding site" evidence="1">
    <location>
        <position position="97"/>
    </location>
    <ligand>
        <name>a divalent metal cation</name>
        <dbReference type="ChEBI" id="CHEBI:60240"/>
    </ligand>
</feature>
<feature type="binding site" evidence="1">
    <location>
        <position position="107"/>
    </location>
    <ligand>
        <name>a divalent metal cation</name>
        <dbReference type="ChEBI" id="CHEBI:60240"/>
    </ligand>
</feature>
<feature type="binding site" evidence="1">
    <location>
        <begin position="109"/>
        <end position="111"/>
    </location>
    <ligand>
        <name>substrate</name>
    </ligand>
</feature>
<feature type="binding site" evidence="1">
    <location>
        <position position="146"/>
    </location>
    <ligand>
        <name>a divalent metal cation</name>
        <dbReference type="ChEBI" id="CHEBI:60240"/>
    </ligand>
</feature>
<feature type="binding site" evidence="1">
    <location>
        <position position="176"/>
    </location>
    <ligand>
        <name>a divalent metal cation</name>
        <dbReference type="ChEBI" id="CHEBI:60240"/>
    </ligand>
</feature>
<feature type="binding site" evidence="1">
    <location>
        <begin position="259"/>
        <end position="261"/>
    </location>
    <ligand>
        <name>substrate</name>
    </ligand>
</feature>
<feature type="site" description="Important for dimerization" evidence="1">
    <location>
        <position position="176"/>
    </location>
</feature>
<dbReference type="EC" id="1.3.3.3" evidence="1"/>
<dbReference type="EMBL" id="FM209186">
    <property type="protein sequence ID" value="CAW24751.1"/>
    <property type="molecule type" value="Genomic_DNA"/>
</dbReference>
<dbReference type="RefSeq" id="WP_012613421.1">
    <property type="nucleotide sequence ID" value="NC_011770.1"/>
</dbReference>
<dbReference type="SMR" id="B7V0Q9"/>
<dbReference type="KEGG" id="pag:PLES_00231"/>
<dbReference type="HOGENOM" id="CLU_026169_0_1_6"/>
<dbReference type="UniPathway" id="UPA00251">
    <property type="reaction ID" value="UER00322"/>
</dbReference>
<dbReference type="GO" id="GO:0005737">
    <property type="term" value="C:cytoplasm"/>
    <property type="evidence" value="ECO:0007669"/>
    <property type="project" value="UniProtKB-SubCell"/>
</dbReference>
<dbReference type="GO" id="GO:0004109">
    <property type="term" value="F:coproporphyrinogen oxidase activity"/>
    <property type="evidence" value="ECO:0007669"/>
    <property type="project" value="UniProtKB-UniRule"/>
</dbReference>
<dbReference type="GO" id="GO:0046872">
    <property type="term" value="F:metal ion binding"/>
    <property type="evidence" value="ECO:0007669"/>
    <property type="project" value="UniProtKB-KW"/>
</dbReference>
<dbReference type="GO" id="GO:0042803">
    <property type="term" value="F:protein homodimerization activity"/>
    <property type="evidence" value="ECO:0000250"/>
    <property type="project" value="UniProtKB"/>
</dbReference>
<dbReference type="GO" id="GO:0006782">
    <property type="term" value="P:protoporphyrinogen IX biosynthetic process"/>
    <property type="evidence" value="ECO:0007669"/>
    <property type="project" value="UniProtKB-UniRule"/>
</dbReference>
<dbReference type="FunFam" id="3.40.1500.10:FF:000001">
    <property type="entry name" value="Oxygen-dependent coproporphyrinogen-III oxidase"/>
    <property type="match status" value="1"/>
</dbReference>
<dbReference type="Gene3D" id="3.40.1500.10">
    <property type="entry name" value="Coproporphyrinogen III oxidase, aerobic"/>
    <property type="match status" value="1"/>
</dbReference>
<dbReference type="HAMAP" id="MF_00333">
    <property type="entry name" value="Coprogen_oxidas"/>
    <property type="match status" value="1"/>
</dbReference>
<dbReference type="InterPro" id="IPR001260">
    <property type="entry name" value="Coprogen_oxidase_aer"/>
</dbReference>
<dbReference type="InterPro" id="IPR036406">
    <property type="entry name" value="Coprogen_oxidase_aer_sf"/>
</dbReference>
<dbReference type="InterPro" id="IPR018375">
    <property type="entry name" value="Coprogen_oxidase_CS"/>
</dbReference>
<dbReference type="NCBIfam" id="NF003727">
    <property type="entry name" value="PRK05330.1"/>
    <property type="match status" value="1"/>
</dbReference>
<dbReference type="PANTHER" id="PTHR10755">
    <property type="entry name" value="COPROPORPHYRINOGEN III OXIDASE, MITOCHONDRIAL"/>
    <property type="match status" value="1"/>
</dbReference>
<dbReference type="PANTHER" id="PTHR10755:SF0">
    <property type="entry name" value="OXYGEN-DEPENDENT COPROPORPHYRINOGEN-III OXIDASE, MITOCHONDRIAL"/>
    <property type="match status" value="1"/>
</dbReference>
<dbReference type="Pfam" id="PF01218">
    <property type="entry name" value="Coprogen_oxidas"/>
    <property type="match status" value="1"/>
</dbReference>
<dbReference type="PIRSF" id="PIRSF000166">
    <property type="entry name" value="Coproporphyri_ox"/>
    <property type="match status" value="1"/>
</dbReference>
<dbReference type="PRINTS" id="PR00073">
    <property type="entry name" value="COPRGNOXDASE"/>
</dbReference>
<dbReference type="SUPFAM" id="SSF102886">
    <property type="entry name" value="Coproporphyrinogen III oxidase"/>
    <property type="match status" value="1"/>
</dbReference>
<dbReference type="PROSITE" id="PS01021">
    <property type="entry name" value="COPROGEN_OXIDASE"/>
    <property type="match status" value="1"/>
</dbReference>